<protein>
    <recommendedName>
        <fullName evidence="12">Phospholipid-transporting ATPase ABCA3</fullName>
        <ecNumber evidence="6">7.6.2.1</ecNumber>
    </recommendedName>
    <alternativeName>
        <fullName evidence="12">ATP-binding cassette sub-family A member 3</fullName>
    </alternativeName>
    <alternativeName>
        <fullName evidence="2">Xenobiotic-transporting ATPase ABCA3</fullName>
        <ecNumber evidence="2">7.6.2.2</ecNumber>
    </alternativeName>
    <component>
        <recommendedName>
            <fullName evidence="2">150 Kda mature form</fullName>
        </recommendedName>
    </component>
</protein>
<accession>Q8R420</accession>
<accession>Q3U3L4</accession>
<reference key="1">
    <citation type="submission" date="2002-03" db="EMBL/GenBank/DDBJ databases">
        <title>Mus musculus ABCA3 cDNA.</title>
        <authorList>
            <person name="Gray J.M."/>
            <person name="Zhao M."/>
            <person name="Fisher A.B."/>
            <person name="Shuman H."/>
        </authorList>
    </citation>
    <scope>NUCLEOTIDE SEQUENCE [MRNA]</scope>
    <source>
        <strain>129/Sv</strain>
    </source>
</reference>
<reference key="2">
    <citation type="journal article" date="2005" name="Science">
        <title>The transcriptional landscape of the mammalian genome.</title>
        <authorList>
            <person name="Carninci P."/>
            <person name="Kasukawa T."/>
            <person name="Katayama S."/>
            <person name="Gough J."/>
            <person name="Frith M.C."/>
            <person name="Maeda N."/>
            <person name="Oyama R."/>
            <person name="Ravasi T."/>
            <person name="Lenhard B."/>
            <person name="Wells C."/>
            <person name="Kodzius R."/>
            <person name="Shimokawa K."/>
            <person name="Bajic V.B."/>
            <person name="Brenner S.E."/>
            <person name="Batalov S."/>
            <person name="Forrest A.R."/>
            <person name="Zavolan M."/>
            <person name="Davis M.J."/>
            <person name="Wilming L.G."/>
            <person name="Aidinis V."/>
            <person name="Allen J.E."/>
            <person name="Ambesi-Impiombato A."/>
            <person name="Apweiler R."/>
            <person name="Aturaliya R.N."/>
            <person name="Bailey T.L."/>
            <person name="Bansal M."/>
            <person name="Baxter L."/>
            <person name="Beisel K.W."/>
            <person name="Bersano T."/>
            <person name="Bono H."/>
            <person name="Chalk A.M."/>
            <person name="Chiu K.P."/>
            <person name="Choudhary V."/>
            <person name="Christoffels A."/>
            <person name="Clutterbuck D.R."/>
            <person name="Crowe M.L."/>
            <person name="Dalla E."/>
            <person name="Dalrymple B.P."/>
            <person name="de Bono B."/>
            <person name="Della Gatta G."/>
            <person name="di Bernardo D."/>
            <person name="Down T."/>
            <person name="Engstrom P."/>
            <person name="Fagiolini M."/>
            <person name="Faulkner G."/>
            <person name="Fletcher C.F."/>
            <person name="Fukushima T."/>
            <person name="Furuno M."/>
            <person name="Futaki S."/>
            <person name="Gariboldi M."/>
            <person name="Georgii-Hemming P."/>
            <person name="Gingeras T.R."/>
            <person name="Gojobori T."/>
            <person name="Green R.E."/>
            <person name="Gustincich S."/>
            <person name="Harbers M."/>
            <person name="Hayashi Y."/>
            <person name="Hensch T.K."/>
            <person name="Hirokawa N."/>
            <person name="Hill D."/>
            <person name="Huminiecki L."/>
            <person name="Iacono M."/>
            <person name="Ikeo K."/>
            <person name="Iwama A."/>
            <person name="Ishikawa T."/>
            <person name="Jakt M."/>
            <person name="Kanapin A."/>
            <person name="Katoh M."/>
            <person name="Kawasawa Y."/>
            <person name="Kelso J."/>
            <person name="Kitamura H."/>
            <person name="Kitano H."/>
            <person name="Kollias G."/>
            <person name="Krishnan S.P."/>
            <person name="Kruger A."/>
            <person name="Kummerfeld S.K."/>
            <person name="Kurochkin I.V."/>
            <person name="Lareau L.F."/>
            <person name="Lazarevic D."/>
            <person name="Lipovich L."/>
            <person name="Liu J."/>
            <person name="Liuni S."/>
            <person name="McWilliam S."/>
            <person name="Madan Babu M."/>
            <person name="Madera M."/>
            <person name="Marchionni L."/>
            <person name="Matsuda H."/>
            <person name="Matsuzawa S."/>
            <person name="Miki H."/>
            <person name="Mignone F."/>
            <person name="Miyake S."/>
            <person name="Morris K."/>
            <person name="Mottagui-Tabar S."/>
            <person name="Mulder N."/>
            <person name="Nakano N."/>
            <person name="Nakauchi H."/>
            <person name="Ng P."/>
            <person name="Nilsson R."/>
            <person name="Nishiguchi S."/>
            <person name="Nishikawa S."/>
            <person name="Nori F."/>
            <person name="Ohara O."/>
            <person name="Okazaki Y."/>
            <person name="Orlando V."/>
            <person name="Pang K.C."/>
            <person name="Pavan W.J."/>
            <person name="Pavesi G."/>
            <person name="Pesole G."/>
            <person name="Petrovsky N."/>
            <person name="Piazza S."/>
            <person name="Reed J."/>
            <person name="Reid J.F."/>
            <person name="Ring B.Z."/>
            <person name="Ringwald M."/>
            <person name="Rost B."/>
            <person name="Ruan Y."/>
            <person name="Salzberg S.L."/>
            <person name="Sandelin A."/>
            <person name="Schneider C."/>
            <person name="Schoenbach C."/>
            <person name="Sekiguchi K."/>
            <person name="Semple C.A."/>
            <person name="Seno S."/>
            <person name="Sessa L."/>
            <person name="Sheng Y."/>
            <person name="Shibata Y."/>
            <person name="Shimada H."/>
            <person name="Shimada K."/>
            <person name="Silva D."/>
            <person name="Sinclair B."/>
            <person name="Sperling S."/>
            <person name="Stupka E."/>
            <person name="Sugiura K."/>
            <person name="Sultana R."/>
            <person name="Takenaka Y."/>
            <person name="Taki K."/>
            <person name="Tammoja K."/>
            <person name="Tan S.L."/>
            <person name="Tang S."/>
            <person name="Taylor M.S."/>
            <person name="Tegner J."/>
            <person name="Teichmann S.A."/>
            <person name="Ueda H.R."/>
            <person name="van Nimwegen E."/>
            <person name="Verardo R."/>
            <person name="Wei C.L."/>
            <person name="Yagi K."/>
            <person name="Yamanishi H."/>
            <person name="Zabarovsky E."/>
            <person name="Zhu S."/>
            <person name="Zimmer A."/>
            <person name="Hide W."/>
            <person name="Bult C."/>
            <person name="Grimmond S.M."/>
            <person name="Teasdale R.D."/>
            <person name="Liu E.T."/>
            <person name="Brusic V."/>
            <person name="Quackenbush J."/>
            <person name="Wahlestedt C."/>
            <person name="Mattick J.S."/>
            <person name="Hume D.A."/>
            <person name="Kai C."/>
            <person name="Sasaki D."/>
            <person name="Tomaru Y."/>
            <person name="Fukuda S."/>
            <person name="Kanamori-Katayama M."/>
            <person name="Suzuki M."/>
            <person name="Aoki J."/>
            <person name="Arakawa T."/>
            <person name="Iida J."/>
            <person name="Imamura K."/>
            <person name="Itoh M."/>
            <person name="Kato T."/>
            <person name="Kawaji H."/>
            <person name="Kawagashira N."/>
            <person name="Kawashima T."/>
            <person name="Kojima M."/>
            <person name="Kondo S."/>
            <person name="Konno H."/>
            <person name="Nakano K."/>
            <person name="Ninomiya N."/>
            <person name="Nishio T."/>
            <person name="Okada M."/>
            <person name="Plessy C."/>
            <person name="Shibata K."/>
            <person name="Shiraki T."/>
            <person name="Suzuki S."/>
            <person name="Tagami M."/>
            <person name="Waki K."/>
            <person name="Watahiki A."/>
            <person name="Okamura-Oho Y."/>
            <person name="Suzuki H."/>
            <person name="Kawai J."/>
            <person name="Hayashizaki Y."/>
        </authorList>
    </citation>
    <scope>NUCLEOTIDE SEQUENCE [LARGE SCALE MRNA]</scope>
    <source>
        <strain>NOD</strain>
    </source>
</reference>
<reference key="3">
    <citation type="journal article" date="2002" name="J. Biol. Chem.">
        <title>Identification of LBM180, a lamellar body limiting membrane protein of alveolar type II cells, as the ABC transporter protein ABCA3.</title>
        <authorList>
            <person name="Mulugeta S."/>
            <person name="Gray J.M."/>
            <person name="Notarfrancesco K.L."/>
            <person name="Gonzales L.W."/>
            <person name="Koval M."/>
            <person name="Feinstein S.I."/>
            <person name="Ballard P.L."/>
            <person name="Fisher A.B."/>
            <person name="Shuman H."/>
        </authorList>
    </citation>
    <scope>NUCLEOTIDE SEQUENCE [MRNA] OF 117-197</scope>
    <scope>SUBCELLULAR LOCATION</scope>
</reference>
<reference key="4">
    <citation type="journal article" date="2007" name="Biochem. Biophys. Res. Commun.">
        <title>Targeted inactivation of the murine Abca3 gene leads to respiratory failure in newborns with defective lamellar bodies.</title>
        <authorList>
            <person name="Hammel M."/>
            <person name="Michel G."/>
            <person name="Hoefer C."/>
            <person name="Klaften M."/>
            <person name="Mueller-Hoecker J."/>
            <person name="de Angelis M.H."/>
            <person name="Holzinger A."/>
        </authorList>
    </citation>
    <scope>DISRUPTION PHENOTYPE</scope>
    <scope>FUNCTION</scope>
</reference>
<reference key="5">
    <citation type="journal article" date="2007" name="J. Biol. Chem.">
        <title>ABCA3 is critical for lamellar body biogenesis in vivo.</title>
        <authorList>
            <person name="Cheong N."/>
            <person name="Zhang H."/>
            <person name="Madesh M."/>
            <person name="Zhao M."/>
            <person name="Yu K."/>
            <person name="Dodia C."/>
            <person name="Fisher A.B."/>
            <person name="Savani R.C."/>
            <person name="Shuman H."/>
        </authorList>
    </citation>
    <scope>DISRUPTION PHENOTYPE</scope>
    <scope>FUNCTION</scope>
</reference>
<reference key="6">
    <citation type="journal article" date="2007" name="J. Biol. Chem.">
        <title>ABCA3 as a lipid transporter in pulmonary surfactant biogenesis.</title>
        <authorList>
            <person name="Ban N."/>
            <person name="Matsumura Y."/>
            <person name="Sakai H."/>
            <person name="Takanezawa Y."/>
            <person name="Sasaki M."/>
            <person name="Arai H."/>
            <person name="Inagaki N."/>
        </authorList>
    </citation>
    <scope>DISRUPTION PHENOTYPE</scope>
    <scope>FUNCTION</scope>
</reference>
<reference key="7">
    <citation type="journal article" date="2007" name="J. Lipid Res.">
        <title>ABCA3 inactivation in mice causes respiratory failure, loss of pulmonary surfactant, and depletion of lung phosphatidylglycerol.</title>
        <authorList>
            <person name="Fitzgerald M.L."/>
            <person name="Xavier R."/>
            <person name="Haley K.J."/>
            <person name="Welti R."/>
            <person name="Goss J.L."/>
            <person name="Brown C.E."/>
            <person name="Zhuang D.Z."/>
            <person name="Bell S.A."/>
            <person name="Lu N."/>
            <person name="McKee M."/>
            <person name="Seed B."/>
            <person name="Freeman M.W."/>
        </authorList>
    </citation>
    <scope>DISRUPTION PHENOTYPE</scope>
    <scope>FUNCTION</scope>
    <scope>TISSUE SPECIFICITY</scope>
    <scope>CATALYTIC ACTIVITY</scope>
</reference>
<reference key="8">
    <citation type="journal article" date="2010" name="Am. J. Physiol.">
        <title>Conditional deletion of Abca3 in alveolar type II cells alters surfactant homeostasis in newborn and adult mice.</title>
        <authorList>
            <person name="Besnard V."/>
            <person name="Matsuzaki Y."/>
            <person name="Clark J."/>
            <person name="Xu Y."/>
            <person name="Wert S.E."/>
            <person name="Ikegami M."/>
            <person name="Stahlman M.T."/>
            <person name="Weaver T.E."/>
            <person name="Hunt A.N."/>
            <person name="Postle A.D."/>
            <person name="Whitsett J.A."/>
        </authorList>
    </citation>
    <scope>DISRUPTION PHENOTYPE</scope>
    <scope>FUNCTION</scope>
</reference>
<reference key="9">
    <citation type="journal article" date="2010" name="Cell">
        <title>A tissue-specific atlas of mouse protein phosphorylation and expression.</title>
        <authorList>
            <person name="Huttlin E.L."/>
            <person name="Jedrychowski M.P."/>
            <person name="Elias J.E."/>
            <person name="Goswami T."/>
            <person name="Rad R."/>
            <person name="Beausoleil S.A."/>
            <person name="Villen J."/>
            <person name="Haas W."/>
            <person name="Sowa M.E."/>
            <person name="Gygi S.P."/>
        </authorList>
    </citation>
    <scope>IDENTIFICATION BY MASS SPECTROMETRY [LARGE SCALE ANALYSIS]</scope>
    <source>
        <tissue>Kidney</tissue>
        <tissue>Liver</tissue>
        <tissue>Lung</tissue>
        <tissue>Spleen</tissue>
    </source>
</reference>
<reference key="10">
    <citation type="journal article" date="2017" name="Ann. Anat.">
        <title>Aberrant lung remodeling in a mouse model of surfactant dysregulation induced by modulation of the Abca3 gene.</title>
        <authorList>
            <person name="Beers M.F."/>
            <person name="Knudsen L."/>
            <person name="Tomer Y."/>
            <person name="Maronn J."/>
            <person name="Zhao M."/>
            <person name="Ochs M."/>
            <person name="Mulugeta S."/>
        </authorList>
    </citation>
    <scope>MUTAGENESIS OF GLU-292</scope>
    <scope>FUNCTION</scope>
</reference>
<comment type="function">
    <text evidence="2 6 7 8 9 10 11">Catalyzes the ATP-dependent transport of phospholipids such as phosphatidylcholine and phosphoglycerol from the cytoplasm into the lumen side of lamellar bodies, in turn participates in the lamellar bodies biogenesis and homeostasis of pulmonary surfactant (PubMed:17142808, PubMed:17267394, PubMed:17540762, PubMed:17577581, PubMed:20190032, PubMed:28034695). Transports preferentially phosphatidylcholine containing short acyl chains (PubMed:17142808). In addition plays a role as an efflux transporter of miltefosine across macrophage membranes and free cholesterol (FC) through intralumenal vesicles by removing FC from the cell as a component of surfactant and protects cells from free cholesterol toxicity (By similarity).</text>
</comment>
<comment type="catalytic activity">
    <reaction evidence="6">
        <text>a 1,2-diacyl-sn-glycero-3-phospho-(1'-sn-glycerol)(in) + ATP + H2O = a 1,2-diacyl-sn-glycero-3-phospho-(1'-sn-glycerol)(out) + ADP + phosphate + H(+)</text>
        <dbReference type="Rhea" id="RHEA:66344"/>
        <dbReference type="ChEBI" id="CHEBI:15377"/>
        <dbReference type="ChEBI" id="CHEBI:15378"/>
        <dbReference type="ChEBI" id="CHEBI:30616"/>
        <dbReference type="ChEBI" id="CHEBI:43474"/>
        <dbReference type="ChEBI" id="CHEBI:64716"/>
        <dbReference type="ChEBI" id="CHEBI:456216"/>
    </reaction>
    <physiologicalReaction direction="left-to-right" evidence="6">
        <dbReference type="Rhea" id="RHEA:66345"/>
    </physiologicalReaction>
</comment>
<comment type="catalytic activity">
    <reaction evidence="6">
        <text>a 1,2-diacyl-sn-glycero-3-phosphocholine(in) + ATP + H2O = a 1,2-diacyl-sn-glycero-3-phosphocholine(out) + ADP + phosphate + H(+)</text>
        <dbReference type="Rhea" id="RHEA:66272"/>
        <dbReference type="ChEBI" id="CHEBI:15377"/>
        <dbReference type="ChEBI" id="CHEBI:15378"/>
        <dbReference type="ChEBI" id="CHEBI:30616"/>
        <dbReference type="ChEBI" id="CHEBI:43474"/>
        <dbReference type="ChEBI" id="CHEBI:57643"/>
        <dbReference type="ChEBI" id="CHEBI:456216"/>
    </reaction>
    <physiologicalReaction direction="left-to-right" evidence="6">
        <dbReference type="Rhea" id="RHEA:66273"/>
    </physiologicalReaction>
</comment>
<comment type="catalytic activity">
    <reaction evidence="6">
        <text>ATP + H2O + phospholipidSide 1 = ADP + phosphate + phospholipidSide 2.</text>
        <dbReference type="EC" id="7.6.2.1"/>
    </reaction>
</comment>
<comment type="catalytic activity">
    <reaction evidence="2">
        <text>ATP + H2O + xenobioticSide 1 = ADP + phosphate + xenobioticSide 2.</text>
        <dbReference type="EC" id="7.6.2.2"/>
    </reaction>
</comment>
<comment type="catalytic activity">
    <reaction evidence="2">
        <text>1,2-dihexadecanoyl-sn-glycero-3-phosphocholine(in) + ATP + H2O = 1,2-dihexadecanoyl-sn-glycero-3-phosphocholine(out) + ADP + phosphate + H(+)</text>
        <dbReference type="Rhea" id="RHEA:66340"/>
        <dbReference type="ChEBI" id="CHEBI:15377"/>
        <dbReference type="ChEBI" id="CHEBI:15378"/>
        <dbReference type="ChEBI" id="CHEBI:30616"/>
        <dbReference type="ChEBI" id="CHEBI:43474"/>
        <dbReference type="ChEBI" id="CHEBI:72999"/>
        <dbReference type="ChEBI" id="CHEBI:456216"/>
    </reaction>
    <physiologicalReaction direction="left-to-right" evidence="2">
        <dbReference type="Rhea" id="RHEA:66341"/>
    </physiologicalReaction>
</comment>
<comment type="catalytic activity">
    <reaction evidence="2">
        <text>cholesterol(in) + ATP + H2O = cholesterol(out) + ADP + phosphate + H(+)</text>
        <dbReference type="Rhea" id="RHEA:39051"/>
        <dbReference type="ChEBI" id="CHEBI:15377"/>
        <dbReference type="ChEBI" id="CHEBI:15378"/>
        <dbReference type="ChEBI" id="CHEBI:16113"/>
        <dbReference type="ChEBI" id="CHEBI:30616"/>
        <dbReference type="ChEBI" id="CHEBI:43474"/>
        <dbReference type="ChEBI" id="CHEBI:456216"/>
    </reaction>
    <physiologicalReaction direction="left-to-right" evidence="2">
        <dbReference type="Rhea" id="RHEA:39052"/>
    </physiologicalReaction>
</comment>
<comment type="subunit">
    <text evidence="2">Homooligomer; disulfide-linked.</text>
</comment>
<comment type="subcellular location">
    <subcellularLocation>
        <location evidence="2">Endosome</location>
        <location evidence="2">Multivesicular body membrane</location>
        <topology evidence="2">Multi-pass membrane protein</topology>
    </subcellularLocation>
    <subcellularLocation>
        <location evidence="2">Cytoplasmic vesicle membrane</location>
    </subcellularLocation>
    <subcellularLocation>
        <location evidence="2">Late endosome membrane</location>
    </subcellularLocation>
    <subcellularLocation>
        <location evidence="2">Lysosome membrane</location>
    </subcellularLocation>
    <text evidence="2 5">Localized in the limiting membrane of lamellar bodies in lung alveolar type II cells (PubMed:11940594). Trafficks via the Golgi, sorting vesicles (SVs) and late endosome/multivesicular body network directly to the outer membrane of lamellar bodies in AT2 lung epithelial cells or to lysosomes and lysosomal-related organelles (LROs) in other cells where undergoes proteolytic cleavage and oligosaccharide processing from high mannose type to complex type. Oligomers formation takes place in a post-endoplasmic reticulum compartment (By similarity).</text>
</comment>
<comment type="tissue specificity">
    <text evidence="6">Highly expressed in the lung and moderately expressed in the kidney, adipose, macrophage, and spleen.</text>
</comment>
<comment type="domain">
    <text evidence="1">Multifunctional polypeptide with two homologous halves, each containing a hydrophobic membrane-anchoring domain and an ATP binding cassette (ABC) domain.</text>
</comment>
<comment type="PTM">
    <text evidence="2">N-glycosylated. Localization at intracellular vesicles is accompanied by processing of oligosaccharide from high mannose type to complex type. N-linked glycosylation at Asn-124 and Asn-140 is required for stability and efficient anterograde trafficking and prevents from proteasomal degradation.</text>
</comment>
<comment type="PTM">
    <text evidence="2">Proteolytically cleaved by CTSL and to a lower extent by CTSB within multivesicular bodies (MVB) and lamellar bodies (LB) leading to a mature form of 150 kDa.</text>
</comment>
<comment type="disruption phenotype">
    <text evidence="6 7 8 9 10">Homozygous knockout mice for ABCA3 are die within one hour after birth (PubMed:17267394, PubMed:17540762, PubMed:17577581). Mice develop respiratory failure immediately after birth with clinical signs such as gasping, cyanosis, failure to achieve inflation of the lung as visible through the skin and reduced motor activity and (PubMed:17142808, PubMed:17267394, PubMed:17577581). Conditional knockout mice in which ABCA3 is deleted in alveolar type II cells die shortly after birth from respiratory distress related to surfactant deficiency but approximately 30% of these mice survive after birth and develop emphysema in the absence of significant pulmonary inflammation (PubMed:20190032).</text>
</comment>
<comment type="similarity">
    <text evidence="12">Belongs to the ABC transporter superfamily. ABCA family.</text>
</comment>
<dbReference type="EC" id="7.6.2.1" evidence="6"/>
<dbReference type="EC" id="7.6.2.2" evidence="2"/>
<dbReference type="EMBL" id="AY083616">
    <property type="protein sequence ID" value="AAL99380.1"/>
    <property type="molecule type" value="mRNA"/>
</dbReference>
<dbReference type="EMBL" id="AK154698">
    <property type="protein sequence ID" value="BAE32771.1"/>
    <property type="molecule type" value="mRNA"/>
</dbReference>
<dbReference type="CCDS" id="CCDS37486.1"/>
<dbReference type="RefSeq" id="NP_001034670.1">
    <property type="nucleotide sequence ID" value="NM_001039581.2"/>
</dbReference>
<dbReference type="RefSeq" id="NP_038883.2">
    <property type="nucleotide sequence ID" value="NM_013855.3"/>
</dbReference>
<dbReference type="RefSeq" id="XP_006524433.1">
    <property type="nucleotide sequence ID" value="XM_006524370.3"/>
</dbReference>
<dbReference type="SMR" id="Q8R420"/>
<dbReference type="BioGRID" id="205216">
    <property type="interactions" value="1"/>
</dbReference>
<dbReference type="FunCoup" id="Q8R420">
    <property type="interactions" value="574"/>
</dbReference>
<dbReference type="STRING" id="10090.ENSMUSP00000045285"/>
<dbReference type="GlyConnect" id="2141">
    <property type="glycosylation" value="1 N-Linked glycan (1 site)"/>
</dbReference>
<dbReference type="GlyCosmos" id="Q8R420">
    <property type="glycosylation" value="7 sites, 1 glycan"/>
</dbReference>
<dbReference type="GlyGen" id="Q8R420">
    <property type="glycosylation" value="8 sites, 4 N-linked glycans (3 sites)"/>
</dbReference>
<dbReference type="iPTMnet" id="Q8R420"/>
<dbReference type="PhosphoSitePlus" id="Q8R420"/>
<dbReference type="SwissPalm" id="Q8R420"/>
<dbReference type="PaxDb" id="10090-ENSMUSP00000045285"/>
<dbReference type="PeptideAtlas" id="Q8R420"/>
<dbReference type="ProteomicsDB" id="285951"/>
<dbReference type="Pumba" id="Q8R420"/>
<dbReference type="Antibodypedia" id="1409">
    <property type="antibodies" value="72 antibodies from 18 providers"/>
</dbReference>
<dbReference type="DNASU" id="27410"/>
<dbReference type="Ensembl" id="ENSMUST00000039013.15">
    <property type="protein sequence ID" value="ENSMUSP00000045285.9"/>
    <property type="gene ID" value="ENSMUSG00000024130.17"/>
</dbReference>
<dbReference type="Ensembl" id="ENSMUST00000079594.12">
    <property type="protein sequence ID" value="ENSMUSP00000078544.6"/>
    <property type="gene ID" value="ENSMUSG00000024130.17"/>
</dbReference>
<dbReference type="GeneID" id="27410"/>
<dbReference type="KEGG" id="mmu:27410"/>
<dbReference type="UCSC" id="uc008avm.2">
    <property type="organism name" value="mouse"/>
</dbReference>
<dbReference type="AGR" id="MGI:1351617"/>
<dbReference type="CTD" id="21"/>
<dbReference type="MGI" id="MGI:1351617">
    <property type="gene designation" value="Abca3"/>
</dbReference>
<dbReference type="VEuPathDB" id="HostDB:ENSMUSG00000024130"/>
<dbReference type="eggNOG" id="KOG0059">
    <property type="taxonomic scope" value="Eukaryota"/>
</dbReference>
<dbReference type="GeneTree" id="ENSGT00940000155289"/>
<dbReference type="InParanoid" id="Q8R420"/>
<dbReference type="OMA" id="WKNWIVL"/>
<dbReference type="OrthoDB" id="6512918at2759"/>
<dbReference type="PhylomeDB" id="Q8R420"/>
<dbReference type="TreeFam" id="TF105191"/>
<dbReference type="Reactome" id="R-MMU-1369062">
    <property type="pathway name" value="ABC transporters in lipid homeostasis"/>
</dbReference>
<dbReference type="Reactome" id="R-MMU-5683826">
    <property type="pathway name" value="Surfactant metabolism"/>
</dbReference>
<dbReference type="BioGRID-ORCS" id="27410">
    <property type="hits" value="3 hits in 77 CRISPR screens"/>
</dbReference>
<dbReference type="ChiTaRS" id="Abca3">
    <property type="organism name" value="mouse"/>
</dbReference>
<dbReference type="PRO" id="PR:Q8R420"/>
<dbReference type="Proteomes" id="UP000000589">
    <property type="component" value="Chromosome 17"/>
</dbReference>
<dbReference type="RNAct" id="Q8R420">
    <property type="molecule type" value="protein"/>
</dbReference>
<dbReference type="Bgee" id="ENSMUSG00000024130">
    <property type="expression patterns" value="Expressed in left lung lobe and 255 other cell types or tissues"/>
</dbReference>
<dbReference type="ExpressionAtlas" id="Q8R420">
    <property type="expression patterns" value="baseline and differential"/>
</dbReference>
<dbReference type="GO" id="GO:0097208">
    <property type="term" value="C:alveolar lamellar body"/>
    <property type="evidence" value="ECO:0000266"/>
    <property type="project" value="MGI"/>
</dbReference>
<dbReference type="GO" id="GO:0097233">
    <property type="term" value="C:alveolar lamellar body membrane"/>
    <property type="evidence" value="ECO:0000314"/>
    <property type="project" value="UniProtKB"/>
</dbReference>
<dbReference type="GO" id="GO:0005770">
    <property type="term" value="C:late endosome"/>
    <property type="evidence" value="ECO:0000250"/>
    <property type="project" value="UniProtKB"/>
</dbReference>
<dbReference type="GO" id="GO:0005765">
    <property type="term" value="C:lysosomal membrane"/>
    <property type="evidence" value="ECO:0007669"/>
    <property type="project" value="UniProtKB-SubCell"/>
</dbReference>
<dbReference type="GO" id="GO:0032585">
    <property type="term" value="C:multivesicular body membrane"/>
    <property type="evidence" value="ECO:0007669"/>
    <property type="project" value="UniProtKB-SubCell"/>
</dbReference>
<dbReference type="GO" id="GO:0005886">
    <property type="term" value="C:plasma membrane"/>
    <property type="evidence" value="ECO:0000266"/>
    <property type="project" value="MGI"/>
</dbReference>
<dbReference type="GO" id="GO:0008559">
    <property type="term" value="F:ABC-type xenobiotic transporter activity"/>
    <property type="evidence" value="ECO:0000250"/>
    <property type="project" value="UniProtKB"/>
</dbReference>
<dbReference type="GO" id="GO:0005524">
    <property type="term" value="F:ATP binding"/>
    <property type="evidence" value="ECO:0007669"/>
    <property type="project" value="UniProtKB-KW"/>
</dbReference>
<dbReference type="GO" id="GO:0016887">
    <property type="term" value="F:ATP hydrolysis activity"/>
    <property type="evidence" value="ECO:0000250"/>
    <property type="project" value="UniProtKB"/>
</dbReference>
<dbReference type="GO" id="GO:0140345">
    <property type="term" value="F:phosphatidylcholine flippase activity"/>
    <property type="evidence" value="ECO:0000250"/>
    <property type="project" value="UniProtKB"/>
</dbReference>
<dbReference type="GO" id="GO:0120019">
    <property type="term" value="F:phosphatidylcholine transfer activity"/>
    <property type="evidence" value="ECO:0000250"/>
    <property type="project" value="UniProtKB"/>
</dbReference>
<dbReference type="GO" id="GO:0030324">
    <property type="term" value="P:lung development"/>
    <property type="evidence" value="ECO:0000315"/>
    <property type="project" value="UniProtKB"/>
</dbReference>
<dbReference type="GO" id="GO:0070925">
    <property type="term" value="P:organelle assembly"/>
    <property type="evidence" value="ECO:0000315"/>
    <property type="project" value="UniProtKB"/>
</dbReference>
<dbReference type="GO" id="GO:0046470">
    <property type="term" value="P:phosphatidylcholine metabolic process"/>
    <property type="evidence" value="ECO:0000315"/>
    <property type="project" value="UniProtKB"/>
</dbReference>
<dbReference type="GO" id="GO:0046471">
    <property type="term" value="P:phosphatidylglycerol metabolic process"/>
    <property type="evidence" value="ECO:0000315"/>
    <property type="project" value="UniProtKB"/>
</dbReference>
<dbReference type="GO" id="GO:0055091">
    <property type="term" value="P:phospholipid homeostasis"/>
    <property type="evidence" value="ECO:0000315"/>
    <property type="project" value="UniProtKB"/>
</dbReference>
<dbReference type="GO" id="GO:0015914">
    <property type="term" value="P:phospholipid transport"/>
    <property type="evidence" value="ECO:0000250"/>
    <property type="project" value="UniProtKB"/>
</dbReference>
<dbReference type="GO" id="GO:0010875">
    <property type="term" value="P:positive regulation of cholesterol efflux"/>
    <property type="evidence" value="ECO:0000250"/>
    <property type="project" value="UniProtKB"/>
</dbReference>
<dbReference type="GO" id="GO:1902995">
    <property type="term" value="P:positive regulation of phospholipid efflux"/>
    <property type="evidence" value="ECO:0000250"/>
    <property type="project" value="UniProtKB"/>
</dbReference>
<dbReference type="GO" id="GO:2001140">
    <property type="term" value="P:positive regulation of phospholipid transport"/>
    <property type="evidence" value="ECO:0000250"/>
    <property type="project" value="UniProtKB"/>
</dbReference>
<dbReference type="GO" id="GO:0032464">
    <property type="term" value="P:positive regulation of protein homooligomerization"/>
    <property type="evidence" value="ECO:0007669"/>
    <property type="project" value="Ensembl"/>
</dbReference>
<dbReference type="GO" id="GO:0046890">
    <property type="term" value="P:regulation of lipid biosynthetic process"/>
    <property type="evidence" value="ECO:0000315"/>
    <property type="project" value="UniProtKB"/>
</dbReference>
<dbReference type="GO" id="GO:0032368">
    <property type="term" value="P:regulation of lipid transport"/>
    <property type="evidence" value="ECO:0000315"/>
    <property type="project" value="UniProtKB"/>
</dbReference>
<dbReference type="GO" id="GO:0150172">
    <property type="term" value="P:regulation of phosphatidylcholine metabolic process"/>
    <property type="evidence" value="ECO:0000250"/>
    <property type="project" value="UniProtKB"/>
</dbReference>
<dbReference type="GO" id="GO:0051384">
    <property type="term" value="P:response to glucocorticoid"/>
    <property type="evidence" value="ECO:0007669"/>
    <property type="project" value="Ensembl"/>
</dbReference>
<dbReference type="GO" id="GO:0043129">
    <property type="term" value="P:surfactant homeostasis"/>
    <property type="evidence" value="ECO:0000315"/>
    <property type="project" value="UniProtKB"/>
</dbReference>
<dbReference type="GO" id="GO:0046618">
    <property type="term" value="P:xenobiotic export from cell"/>
    <property type="evidence" value="ECO:0000250"/>
    <property type="project" value="UniProtKB"/>
</dbReference>
<dbReference type="GO" id="GO:0006855">
    <property type="term" value="P:xenobiotic transmembrane transport"/>
    <property type="evidence" value="ECO:0000250"/>
    <property type="project" value="UniProtKB"/>
</dbReference>
<dbReference type="GO" id="GO:0042908">
    <property type="term" value="P:xenobiotic transport"/>
    <property type="evidence" value="ECO:0000250"/>
    <property type="project" value="UniProtKB"/>
</dbReference>
<dbReference type="CDD" id="cd03263">
    <property type="entry name" value="ABC_subfamily_A"/>
    <property type="match status" value="2"/>
</dbReference>
<dbReference type="FunFam" id="3.40.50.300:FF:000327">
    <property type="entry name" value="ATP-binding cassette sub-family A member 3"/>
    <property type="match status" value="1"/>
</dbReference>
<dbReference type="FunFam" id="3.40.50.300:FF:000465">
    <property type="entry name" value="ATP-binding cassette, sub-family A (ABC1), member 3"/>
    <property type="match status" value="1"/>
</dbReference>
<dbReference type="Gene3D" id="3.40.50.300">
    <property type="entry name" value="P-loop containing nucleotide triphosphate hydrolases"/>
    <property type="match status" value="2"/>
</dbReference>
<dbReference type="InterPro" id="IPR003593">
    <property type="entry name" value="AAA+_ATPase"/>
</dbReference>
<dbReference type="InterPro" id="IPR013525">
    <property type="entry name" value="ABC2_TM"/>
</dbReference>
<dbReference type="InterPro" id="IPR003439">
    <property type="entry name" value="ABC_transporter-like_ATP-bd"/>
</dbReference>
<dbReference type="InterPro" id="IPR017871">
    <property type="entry name" value="ABC_transporter-like_CS"/>
</dbReference>
<dbReference type="InterPro" id="IPR026082">
    <property type="entry name" value="ABCA"/>
</dbReference>
<dbReference type="InterPro" id="IPR027417">
    <property type="entry name" value="P-loop_NTPase"/>
</dbReference>
<dbReference type="InterPro" id="IPR056264">
    <property type="entry name" value="R2_ABCA1-4-like"/>
</dbReference>
<dbReference type="PANTHER" id="PTHR19229:SF250">
    <property type="entry name" value="ABC TRANSPORTER DOMAIN-CONTAINING PROTEIN-RELATED"/>
    <property type="match status" value="1"/>
</dbReference>
<dbReference type="PANTHER" id="PTHR19229">
    <property type="entry name" value="ATP-BINDING CASSETTE TRANSPORTER SUBFAMILY A ABCA"/>
    <property type="match status" value="1"/>
</dbReference>
<dbReference type="Pfam" id="PF12698">
    <property type="entry name" value="ABC2_membrane_3"/>
    <property type="match status" value="2"/>
</dbReference>
<dbReference type="Pfam" id="PF00005">
    <property type="entry name" value="ABC_tran"/>
    <property type="match status" value="2"/>
</dbReference>
<dbReference type="Pfam" id="PF23321">
    <property type="entry name" value="R1_ABCA1"/>
    <property type="match status" value="1"/>
</dbReference>
<dbReference type="SMART" id="SM00382">
    <property type="entry name" value="AAA"/>
    <property type="match status" value="2"/>
</dbReference>
<dbReference type="SUPFAM" id="SSF52540">
    <property type="entry name" value="P-loop containing nucleoside triphosphate hydrolases"/>
    <property type="match status" value="2"/>
</dbReference>
<dbReference type="PROSITE" id="PS00211">
    <property type="entry name" value="ABC_TRANSPORTER_1"/>
    <property type="match status" value="1"/>
</dbReference>
<dbReference type="PROSITE" id="PS50893">
    <property type="entry name" value="ABC_TRANSPORTER_2"/>
    <property type="match status" value="2"/>
</dbReference>
<evidence type="ECO:0000250" key="1"/>
<evidence type="ECO:0000250" key="2">
    <source>
        <dbReference type="UniProtKB" id="Q99758"/>
    </source>
</evidence>
<evidence type="ECO:0000255" key="3"/>
<evidence type="ECO:0000255" key="4">
    <source>
        <dbReference type="PROSITE-ProRule" id="PRU00434"/>
    </source>
</evidence>
<evidence type="ECO:0000269" key="5">
    <source>
    </source>
</evidence>
<evidence type="ECO:0000269" key="6">
    <source>
    </source>
</evidence>
<evidence type="ECO:0000269" key="7">
    <source>
    </source>
</evidence>
<evidence type="ECO:0000269" key="8">
    <source>
    </source>
</evidence>
<evidence type="ECO:0000269" key="9">
    <source>
    </source>
</evidence>
<evidence type="ECO:0000269" key="10">
    <source>
    </source>
</evidence>
<evidence type="ECO:0000269" key="11">
    <source>
    </source>
</evidence>
<evidence type="ECO:0000305" key="12"/>
<organism>
    <name type="scientific">Mus musculus</name>
    <name type="common">Mouse</name>
    <dbReference type="NCBI Taxonomy" id="10090"/>
    <lineage>
        <taxon>Eukaryota</taxon>
        <taxon>Metazoa</taxon>
        <taxon>Chordata</taxon>
        <taxon>Craniata</taxon>
        <taxon>Vertebrata</taxon>
        <taxon>Euteleostomi</taxon>
        <taxon>Mammalia</taxon>
        <taxon>Eutheria</taxon>
        <taxon>Euarchontoglires</taxon>
        <taxon>Glires</taxon>
        <taxon>Rodentia</taxon>
        <taxon>Myomorpha</taxon>
        <taxon>Muroidea</taxon>
        <taxon>Muridae</taxon>
        <taxon>Murinae</taxon>
        <taxon>Mus</taxon>
        <taxon>Mus</taxon>
    </lineage>
</organism>
<name>ABCA3_MOUSE</name>
<gene>
    <name type="primary">Abca3</name>
</gene>
<proteinExistence type="evidence at protein level"/>
<feature type="chain" id="PRO_0000093294" description="Phospholipid-transporting ATPase ABCA3">
    <location>
        <begin position="1"/>
        <end position="1704"/>
    </location>
</feature>
<feature type="chain" id="PRO_0000452298" description="150 Kda mature form" evidence="2">
    <location>
        <begin position="175"/>
        <end position="1704"/>
    </location>
</feature>
<feature type="transmembrane region" description="Helical" evidence="3">
    <location>
        <begin position="22"/>
        <end position="42"/>
    </location>
</feature>
<feature type="transmembrane region" description="Helical" evidence="3">
    <location>
        <begin position="261"/>
        <end position="283"/>
    </location>
</feature>
<feature type="transmembrane region" description="Helical" evidence="3">
    <location>
        <begin position="307"/>
        <end position="327"/>
    </location>
</feature>
<feature type="transmembrane region" description="Helical" evidence="3">
    <location>
        <begin position="344"/>
        <end position="364"/>
    </location>
</feature>
<feature type="transmembrane region" description="Helical" evidence="3">
    <location>
        <begin position="373"/>
        <end position="393"/>
    </location>
</feature>
<feature type="transmembrane region" description="Helical" evidence="3">
    <location>
        <begin position="405"/>
        <end position="425"/>
    </location>
</feature>
<feature type="transmembrane region" description="Helical" evidence="3">
    <location>
        <begin position="447"/>
        <end position="467"/>
    </location>
</feature>
<feature type="transmembrane region" description="Helical" evidence="3">
    <location>
        <begin position="925"/>
        <end position="945"/>
    </location>
</feature>
<feature type="transmembrane region" description="Helical" evidence="3">
    <location>
        <begin position="1100"/>
        <end position="1120"/>
    </location>
</feature>
<feature type="transmembrane region" description="Helical" evidence="3">
    <location>
        <begin position="1144"/>
        <end position="1164"/>
    </location>
</feature>
<feature type="transmembrane region" description="Helical" evidence="3">
    <location>
        <begin position="1183"/>
        <end position="1203"/>
    </location>
</feature>
<feature type="transmembrane region" description="Helical" evidence="3">
    <location>
        <begin position="1213"/>
        <end position="1233"/>
    </location>
</feature>
<feature type="transmembrane region" description="Helical" evidence="3">
    <location>
        <begin position="1245"/>
        <end position="1265"/>
    </location>
</feature>
<feature type="transmembrane region" description="Helical" evidence="3">
    <location>
        <begin position="1310"/>
        <end position="1330"/>
    </location>
</feature>
<feature type="domain" description="ABC transporter 1" evidence="4">
    <location>
        <begin position="530"/>
        <end position="763"/>
    </location>
</feature>
<feature type="domain" description="ABC transporter 2" evidence="4">
    <location>
        <begin position="1381"/>
        <end position="1614"/>
    </location>
</feature>
<feature type="binding site" evidence="4">
    <location>
        <begin position="566"/>
        <end position="573"/>
    </location>
    <ligand>
        <name>ATP</name>
        <dbReference type="ChEBI" id="CHEBI:30616"/>
        <label>1</label>
    </ligand>
</feature>
<feature type="binding site" evidence="4">
    <location>
        <begin position="1416"/>
        <end position="1423"/>
    </location>
    <ligand>
        <name>ATP</name>
        <dbReference type="ChEBI" id="CHEBI:30616"/>
        <label>2</label>
    </ligand>
</feature>
<feature type="site" description="Cleavage; by CTSL" evidence="2">
    <location>
        <begin position="174"/>
        <end position="175"/>
    </location>
</feature>
<feature type="glycosylation site" description="N-linked (GlcNAc...) asparagine" evidence="3">
    <location>
        <position position="14"/>
    </location>
</feature>
<feature type="glycosylation site" description="N-linked (GlcNAc...) asparagine" evidence="3">
    <location>
        <position position="53"/>
    </location>
</feature>
<feature type="glycosylation site" description="N-linked (GlcNAc...) asparagine" evidence="3">
    <location>
        <position position="124"/>
    </location>
</feature>
<feature type="glycosylation site" description="N-linked (GlcNAc...) asparagine" evidence="3">
    <location>
        <position position="140"/>
    </location>
</feature>
<feature type="glycosylation site" description="N-linked (GlcNAc...) asparagine" evidence="3">
    <location>
        <position position="228"/>
    </location>
</feature>
<feature type="glycosylation site" description="N-linked (GlcNAc...) asparagine" evidence="3">
    <location>
        <position position="620"/>
    </location>
</feature>
<feature type="glycosylation site" description="N-linked (GlcNAc...) asparagine" evidence="3">
    <location>
        <position position="1350"/>
    </location>
</feature>
<feature type="mutagenesis site" description="Knockin new born mice are healthy and survive into adulthood without overt signs of respiratory distress. Knockin mice show a severe lung phenotype that begins with alveolar inflammatory cell infiltration at the early stage of the mouse life followed by aberrant lung remodeling with characteristics of diffuse parenchymal lung disease (DPLD)- and emphysema-like alveolar disruption in older mice." evidence="11">
    <original>E</original>
    <variation>V</variation>
    <location>
        <position position="292"/>
    </location>
</feature>
<feature type="sequence conflict" description="In Ref. 1; AAL99380." evidence="12" ref="1">
    <original>A</original>
    <variation>T</variation>
    <location>
        <position position="217"/>
    </location>
</feature>
<feature type="sequence conflict" description="In Ref. 1; AAL99380." evidence="12" ref="1">
    <original>N</original>
    <variation>D</variation>
    <location>
        <position position="446"/>
    </location>
</feature>
<feature type="sequence conflict" description="In Ref. 1; AAL99380." evidence="12" ref="1">
    <original>H</original>
    <variation>R</variation>
    <location>
        <position position="589"/>
    </location>
</feature>
<feature type="sequence conflict" description="In Ref. 1; AAL99380." evidence="12" ref="1">
    <original>S</original>
    <variation>P</variation>
    <location>
        <position position="693"/>
    </location>
</feature>
<feature type="sequence conflict" description="In Ref. 1; AAL99380." evidence="12" ref="1">
    <original>L</original>
    <variation>Q</variation>
    <location>
        <position position="939"/>
    </location>
</feature>
<feature type="sequence conflict" description="In Ref. 1; AAL99380." evidence="12" ref="1">
    <original>Q</original>
    <variation>W</variation>
    <location>
        <position position="1069"/>
    </location>
</feature>
<feature type="sequence conflict" description="In Ref. 1; AAL99380." evidence="12" ref="1">
    <original>F</original>
    <variation>L</variation>
    <location>
        <position position="1143"/>
    </location>
</feature>
<feature type="sequence conflict" description="In Ref. 1; AAL99380." evidence="12" ref="1">
    <original>L</original>
    <variation>P</variation>
    <location>
        <position position="1185"/>
    </location>
</feature>
<feature type="sequence conflict" description="In Ref. 1; AAL99380." evidence="12" ref="1">
    <original>R</original>
    <variation>C</variation>
    <location>
        <position position="1232"/>
    </location>
</feature>
<sequence length="1704" mass="191971">MAVLRQLTLLLWKNYTLKKRKVLVTVLELFLPLLFSGILIWLRLKIQSENVPNATVYPDQSIQELPLFFSFPPPGGTWELAYVPSHSDAARTITETVKREFMIKMRVHGFSSEKDFEDYIRYDNHSSSVLAAVVFEHSFNHSQDPLPLAVKYHLRFSYTRRNYMWTQTGNIFLKETEGWHTTSLFPLFPSPGPREPSSPDGGEPGYIREGFLAMQHAVDKAIMRYHANTSAQQLFQKLMVITKRFPFPPYISDPFLIAIQYQLPLLLMLSFTYTSLTIIRAVVQEKEKKLKEYMRMMGLNSWLHWSAWFLMFFLFFLIVVSFMTLLFCVKVKKDIAVLSNSDPSLVLAFLLCFAISSISFSFMVSTFFSKANIAAAVGGFLYFFTYTPYFFVAPRYNWMTLSQKLLSCLLSNVAMAMGAQLIGKFEAKGTGIQWRDLLNPVNVDDNFCFGQVLGMLLLDSALYGLVTWYVEAVFPGQFGVPQPWHFFLMPSYWCGNPRTVVGKEEEGSDPEKALRNEYFEAEPEDLVAGIKIKHLSKVFQVGNKDKMGIRDLTLNLYEGQITVLLGHNGAGKTTTMSLLTGLFPPTSGHAYIHGYEISQDMAQIRKSLGLCPQHDVLFDNLTVAEHLYFYAQLKGLSLQKCPEEVKQMLHILSLEDKRDLRSKFLSGGMKRKLSIGIALIAGSKVLMLDEPTSGMDAVSRRAIWDLLQQQKSDRTVLLTTHFMDEADLLGDRIAILAKGELQCCGSSLFLKQKYGAGYHMTLVKEPHCNPEGISQLVHHHVPNAMLESHAGAELSFILPKESTHRFESLFAKLEKKQKELGIASFGASVTTMEEVFLRVGKLVDTSMDIQAIQLPALQYQHERRASDWALDSNLCGVMDPTNGIGALIEEEEVLVKLNTGLALHCQQFWAMFLKKAAYSWREWKMVAAQVLVPLTCLTLALLAIHYTSEIFDDPLLKLSLNEYGRTVVPFSVPGTSRLAQQLSENLRDMLQAERQEPREVLGDLEEFLVFRASVEGGGFNERCLVATSFKDRGELTVVTALFNNQAYHSPATALAIVDNLLFKLLCGPQASIEISNYPQPRNTLQVAKDHFNEGRKGFDIALNLLIAMAFLASTFSILAVSERAVQAKHVQFVSGVHVATFWFSALLWDLISFLVPSLLLLVVFQAFNVHAFTRDGHMADLLLLLMLYGWAIIPLMYLMSFFFSAASTAYTRLTIFNILSGIATFIMVTIMRIPAVKLEELSRTLDHVFLVLPNHCLGMAVSNFYENYETRRYCTSSELAAHYCKKYNIQYQESFYAWSTPGVGKFVTSMAASGGIYLTLLFLIETNLLWRLRTFICAFRRRWTLAELQNRTSVLPEDQDVAEERSRILVPSLDSMLDTPLIINELSKVYDQRAPLLAVDRISLAVQKGECFGLLGFNGAGKTTTFKMLTGEETITSGDAFVGGYSISSDIGKVRQRMGYCPQFDALLDHMTGREMLVMYARLRGIPERLINACVENTLRGLLLEPHANKLVKTYSGGNKRKLSTGIALIGEPAVIFLDEPSTGMDPVARRLLWDTVARARESGKAIVITSHSMEECEALCTRLAIMVQGQFKCLGSPQHLKSKFGSGYSLQAKVRSEGKQDALEEFKAFVDLTFPGSILEDEHQDMVHYHLPGCDLSWAKVFGILEKAKEKYGVDDYSVSQISLEQVFLSFAHLQPPTTEDGR</sequence>
<keyword id="KW-0067">ATP-binding</keyword>
<keyword id="KW-0968">Cytoplasmic vesicle</keyword>
<keyword id="KW-1015">Disulfide bond</keyword>
<keyword id="KW-0967">Endosome</keyword>
<keyword id="KW-0325">Glycoprotein</keyword>
<keyword id="KW-0445">Lipid transport</keyword>
<keyword id="KW-0458">Lysosome</keyword>
<keyword id="KW-0472">Membrane</keyword>
<keyword id="KW-0547">Nucleotide-binding</keyword>
<keyword id="KW-1185">Reference proteome</keyword>
<keyword id="KW-0677">Repeat</keyword>
<keyword id="KW-1278">Translocase</keyword>
<keyword id="KW-0812">Transmembrane</keyword>
<keyword id="KW-1133">Transmembrane helix</keyword>
<keyword id="KW-0813">Transport</keyword>